<accession>Q70WY9</accession>
<feature type="chain" id="PRO_0000113789" description="Protein GrpE">
    <location>
        <begin position="1"/>
        <end position="202"/>
    </location>
</feature>
<feature type="region of interest" description="Disordered" evidence="2">
    <location>
        <begin position="21"/>
        <end position="52"/>
    </location>
</feature>
<feature type="compositionally biased region" description="Basic and acidic residues" evidence="2">
    <location>
        <begin position="21"/>
        <end position="37"/>
    </location>
</feature>
<feature type="compositionally biased region" description="Basic residues" evidence="2">
    <location>
        <begin position="38"/>
        <end position="51"/>
    </location>
</feature>
<gene>
    <name evidence="1" type="primary">grpE</name>
</gene>
<protein>
    <recommendedName>
        <fullName evidence="1">Protein GrpE</fullName>
    </recommendedName>
    <alternativeName>
        <fullName evidence="1">HSP-70 cofactor</fullName>
    </alternativeName>
</protein>
<reference key="1">
    <citation type="submission" date="2002-10" db="EMBL/GenBank/DDBJ databases">
        <authorList>
            <person name="Skar C.K."/>
            <person name="Villoing S.C."/>
            <person name="Bakken V."/>
        </authorList>
    </citation>
    <scope>NUCLEOTIDE SEQUENCE [GENOMIC DNA]</scope>
    <source>
        <strain>ATCC 10953 / DSM 20482 / CCUG 9126 / JCM 12990 / NCTC 10562 / 555A</strain>
    </source>
</reference>
<keyword id="KW-0143">Chaperone</keyword>
<keyword id="KW-0963">Cytoplasm</keyword>
<keyword id="KW-0346">Stress response</keyword>
<sequence length="202" mass="23507">MKDKDIKEEVLKEEINKEVNEELKNEEVKEETHEHEHKHGGHTCCGKHGHKHNDEEIGKLKAEIEEWKNEYLRKQADFQNFTKRKEKEVDELKKFASEKIITQFLGSLDNLERAIESSIESKDFDSLLKGIEMIVRNLKDIMSAEGVEEIKTEGVYDPVYHHAVGVEANEDFKEDEIVKVLQKGYMMKGKVIRPAMVIVCKK</sequence>
<name>GRPE_FUSNP</name>
<proteinExistence type="inferred from homology"/>
<comment type="function">
    <text evidence="1">Participates actively in the response to hyperosmotic and heat shock by preventing the aggregation of stress-denatured proteins, in association with DnaK and GrpE. It is the nucleotide exchange factor for DnaK and may function as a thermosensor. Unfolded proteins bind initially to DnaJ; upon interaction with the DnaJ-bound protein, DnaK hydrolyzes its bound ATP, resulting in the formation of a stable complex. GrpE releases ADP from DnaK; ATP binding to DnaK triggers the release of the substrate protein, thus completing the reaction cycle. Several rounds of ATP-dependent interactions between DnaJ, DnaK and GrpE are required for fully efficient folding.</text>
</comment>
<comment type="subunit">
    <text evidence="1">Homodimer.</text>
</comment>
<comment type="subcellular location">
    <subcellularLocation>
        <location evidence="1">Cytoplasm</location>
    </subcellularLocation>
</comment>
<comment type="similarity">
    <text evidence="1">Belongs to the GrpE family.</text>
</comment>
<evidence type="ECO:0000255" key="1">
    <source>
        <dbReference type="HAMAP-Rule" id="MF_01151"/>
    </source>
</evidence>
<evidence type="ECO:0000256" key="2">
    <source>
        <dbReference type="SAM" id="MobiDB-lite"/>
    </source>
</evidence>
<organism>
    <name type="scientific">Fusobacterium nucleatum subsp. polymorphum</name>
    <name type="common">Fusobacterium polymorphum</name>
    <dbReference type="NCBI Taxonomy" id="76857"/>
    <lineage>
        <taxon>Bacteria</taxon>
        <taxon>Fusobacteriati</taxon>
        <taxon>Fusobacteriota</taxon>
        <taxon>Fusobacteriia</taxon>
        <taxon>Fusobacteriales</taxon>
        <taxon>Fusobacteriaceae</taxon>
        <taxon>Fusobacterium</taxon>
    </lineage>
</organism>
<dbReference type="EMBL" id="AJ512795">
    <property type="protein sequence ID" value="CAD55135.1"/>
    <property type="molecule type" value="Genomic_DNA"/>
</dbReference>
<dbReference type="RefSeq" id="WP_005897684.1">
    <property type="nucleotide sequence ID" value="NZ_NIRO01000008.1"/>
</dbReference>
<dbReference type="SMR" id="Q70WY9"/>
<dbReference type="STRING" id="76857.RO02_09555"/>
<dbReference type="GeneID" id="60658619"/>
<dbReference type="PATRIC" id="fig|76857.9.peg.193"/>
<dbReference type="GO" id="GO:0005737">
    <property type="term" value="C:cytoplasm"/>
    <property type="evidence" value="ECO:0007669"/>
    <property type="project" value="UniProtKB-SubCell"/>
</dbReference>
<dbReference type="GO" id="GO:0000774">
    <property type="term" value="F:adenyl-nucleotide exchange factor activity"/>
    <property type="evidence" value="ECO:0007669"/>
    <property type="project" value="InterPro"/>
</dbReference>
<dbReference type="GO" id="GO:0042803">
    <property type="term" value="F:protein homodimerization activity"/>
    <property type="evidence" value="ECO:0007669"/>
    <property type="project" value="InterPro"/>
</dbReference>
<dbReference type="GO" id="GO:0051087">
    <property type="term" value="F:protein-folding chaperone binding"/>
    <property type="evidence" value="ECO:0007669"/>
    <property type="project" value="InterPro"/>
</dbReference>
<dbReference type="GO" id="GO:0051082">
    <property type="term" value="F:unfolded protein binding"/>
    <property type="evidence" value="ECO:0007669"/>
    <property type="project" value="TreeGrafter"/>
</dbReference>
<dbReference type="GO" id="GO:0006457">
    <property type="term" value="P:protein folding"/>
    <property type="evidence" value="ECO:0007669"/>
    <property type="project" value="InterPro"/>
</dbReference>
<dbReference type="CDD" id="cd00446">
    <property type="entry name" value="GrpE"/>
    <property type="match status" value="1"/>
</dbReference>
<dbReference type="Gene3D" id="3.90.20.20">
    <property type="match status" value="1"/>
</dbReference>
<dbReference type="Gene3D" id="2.30.22.10">
    <property type="entry name" value="Head domain of nucleotide exchange factor GrpE"/>
    <property type="match status" value="1"/>
</dbReference>
<dbReference type="HAMAP" id="MF_01151">
    <property type="entry name" value="GrpE"/>
    <property type="match status" value="1"/>
</dbReference>
<dbReference type="InterPro" id="IPR000740">
    <property type="entry name" value="GrpE"/>
</dbReference>
<dbReference type="InterPro" id="IPR013805">
    <property type="entry name" value="GrpE_coiled_coil"/>
</dbReference>
<dbReference type="InterPro" id="IPR009012">
    <property type="entry name" value="GrpE_head"/>
</dbReference>
<dbReference type="NCBIfam" id="NF010738">
    <property type="entry name" value="PRK14140.1"/>
    <property type="match status" value="1"/>
</dbReference>
<dbReference type="PANTHER" id="PTHR21237">
    <property type="entry name" value="GRPE PROTEIN"/>
    <property type="match status" value="1"/>
</dbReference>
<dbReference type="PANTHER" id="PTHR21237:SF23">
    <property type="entry name" value="GRPE PROTEIN HOMOLOG, MITOCHONDRIAL"/>
    <property type="match status" value="1"/>
</dbReference>
<dbReference type="Pfam" id="PF01025">
    <property type="entry name" value="GrpE"/>
    <property type="match status" value="1"/>
</dbReference>
<dbReference type="PRINTS" id="PR00773">
    <property type="entry name" value="GRPEPROTEIN"/>
</dbReference>
<dbReference type="SUPFAM" id="SSF58014">
    <property type="entry name" value="Coiled-coil domain of nucleotide exchange factor GrpE"/>
    <property type="match status" value="1"/>
</dbReference>
<dbReference type="SUPFAM" id="SSF51064">
    <property type="entry name" value="Head domain of nucleotide exchange factor GrpE"/>
    <property type="match status" value="1"/>
</dbReference>
<dbReference type="PROSITE" id="PS01071">
    <property type="entry name" value="GRPE"/>
    <property type="match status" value="1"/>
</dbReference>